<reference key="1">
    <citation type="journal article" date="2007" name="J. Bacteriol.">
        <title>Genome-wide transcriptional changes in Streptococcus gordonii in response to competence signaling peptide.</title>
        <authorList>
            <person name="Vickerman M.M."/>
            <person name="Iobst S."/>
            <person name="Jesionowski A.M."/>
            <person name="Gill S.R."/>
        </authorList>
    </citation>
    <scope>NUCLEOTIDE SEQUENCE [LARGE SCALE GENOMIC DNA]</scope>
    <source>
        <strain>Challis / ATCC 35105 / BCRC 15272 / CH1 / DL1 / V288</strain>
    </source>
</reference>
<accession>A8AVI2</accession>
<evidence type="ECO:0000255" key="1">
    <source>
        <dbReference type="HAMAP-Rule" id="MF_00469"/>
    </source>
</evidence>
<gene>
    <name evidence="1" type="primary">trhO</name>
    <name type="ordered locus">SGO_0476</name>
</gene>
<dbReference type="EC" id="1.14.-.-" evidence="1"/>
<dbReference type="EMBL" id="CP000725">
    <property type="protein sequence ID" value="ABV09400.1"/>
    <property type="molecule type" value="Genomic_DNA"/>
</dbReference>
<dbReference type="RefSeq" id="WP_011999982.1">
    <property type="nucleotide sequence ID" value="NC_009785.1"/>
</dbReference>
<dbReference type="SMR" id="A8AVI2"/>
<dbReference type="STRING" id="467705.SGO_0476"/>
<dbReference type="KEGG" id="sgo:SGO_0476"/>
<dbReference type="eggNOG" id="COG1054">
    <property type="taxonomic scope" value="Bacteria"/>
</dbReference>
<dbReference type="HOGENOM" id="CLU_038878_1_0_9"/>
<dbReference type="Proteomes" id="UP000001131">
    <property type="component" value="Chromosome"/>
</dbReference>
<dbReference type="GO" id="GO:0016705">
    <property type="term" value="F:oxidoreductase activity, acting on paired donors, with incorporation or reduction of molecular oxygen"/>
    <property type="evidence" value="ECO:0007669"/>
    <property type="project" value="UniProtKB-UniRule"/>
</dbReference>
<dbReference type="GO" id="GO:0006400">
    <property type="term" value="P:tRNA modification"/>
    <property type="evidence" value="ECO:0007669"/>
    <property type="project" value="UniProtKB-UniRule"/>
</dbReference>
<dbReference type="CDD" id="cd01518">
    <property type="entry name" value="RHOD_YceA"/>
    <property type="match status" value="1"/>
</dbReference>
<dbReference type="Gene3D" id="3.30.70.100">
    <property type="match status" value="1"/>
</dbReference>
<dbReference type="Gene3D" id="3.40.250.10">
    <property type="entry name" value="Rhodanese-like domain"/>
    <property type="match status" value="1"/>
</dbReference>
<dbReference type="HAMAP" id="MF_00469">
    <property type="entry name" value="TrhO"/>
    <property type="match status" value="1"/>
</dbReference>
<dbReference type="InterPro" id="IPR001763">
    <property type="entry name" value="Rhodanese-like_dom"/>
</dbReference>
<dbReference type="InterPro" id="IPR036873">
    <property type="entry name" value="Rhodanese-like_dom_sf"/>
</dbReference>
<dbReference type="InterPro" id="IPR022111">
    <property type="entry name" value="Rhodanese_C"/>
</dbReference>
<dbReference type="InterPro" id="IPR020936">
    <property type="entry name" value="TrhO"/>
</dbReference>
<dbReference type="InterPro" id="IPR040503">
    <property type="entry name" value="TRHO_N"/>
</dbReference>
<dbReference type="NCBIfam" id="NF001135">
    <property type="entry name" value="PRK00142.1-3"/>
    <property type="match status" value="1"/>
</dbReference>
<dbReference type="NCBIfam" id="NF001137">
    <property type="entry name" value="PRK00142.1-5"/>
    <property type="match status" value="1"/>
</dbReference>
<dbReference type="PANTHER" id="PTHR43268:SF3">
    <property type="entry name" value="RHODANESE-LIKE DOMAIN-CONTAINING PROTEIN 7-RELATED"/>
    <property type="match status" value="1"/>
</dbReference>
<dbReference type="PANTHER" id="PTHR43268">
    <property type="entry name" value="THIOSULFATE SULFURTRANSFERASE/RHODANESE-LIKE DOMAIN-CONTAINING PROTEIN 2"/>
    <property type="match status" value="1"/>
</dbReference>
<dbReference type="Pfam" id="PF00581">
    <property type="entry name" value="Rhodanese"/>
    <property type="match status" value="1"/>
</dbReference>
<dbReference type="Pfam" id="PF12368">
    <property type="entry name" value="Rhodanese_C"/>
    <property type="match status" value="1"/>
</dbReference>
<dbReference type="Pfam" id="PF17773">
    <property type="entry name" value="UPF0176_N"/>
    <property type="match status" value="1"/>
</dbReference>
<dbReference type="SMART" id="SM00450">
    <property type="entry name" value="RHOD"/>
    <property type="match status" value="1"/>
</dbReference>
<dbReference type="SUPFAM" id="SSF52821">
    <property type="entry name" value="Rhodanese/Cell cycle control phosphatase"/>
    <property type="match status" value="1"/>
</dbReference>
<dbReference type="PROSITE" id="PS50206">
    <property type="entry name" value="RHODANESE_3"/>
    <property type="match status" value="1"/>
</dbReference>
<feature type="chain" id="PRO_1000081202" description="tRNA uridine(34) hydroxylase">
    <location>
        <begin position="1"/>
        <end position="328"/>
    </location>
</feature>
<feature type="domain" description="Rhodanese" evidence="1">
    <location>
        <begin position="130"/>
        <end position="224"/>
    </location>
</feature>
<feature type="active site" description="Cysteine persulfide intermediate" evidence="1">
    <location>
        <position position="184"/>
    </location>
</feature>
<comment type="function">
    <text evidence="1">Catalyzes oxygen-dependent 5-hydroxyuridine (ho5U) modification at position 34 in tRNAs.</text>
</comment>
<comment type="catalytic activity">
    <reaction evidence="1">
        <text>uridine(34) in tRNA + AH2 + O2 = 5-hydroxyuridine(34) in tRNA + A + H2O</text>
        <dbReference type="Rhea" id="RHEA:64224"/>
        <dbReference type="Rhea" id="RHEA-COMP:11727"/>
        <dbReference type="Rhea" id="RHEA-COMP:13381"/>
        <dbReference type="ChEBI" id="CHEBI:13193"/>
        <dbReference type="ChEBI" id="CHEBI:15377"/>
        <dbReference type="ChEBI" id="CHEBI:15379"/>
        <dbReference type="ChEBI" id="CHEBI:17499"/>
        <dbReference type="ChEBI" id="CHEBI:65315"/>
        <dbReference type="ChEBI" id="CHEBI:136877"/>
    </reaction>
</comment>
<comment type="similarity">
    <text evidence="1">Belongs to the TrhO family.</text>
</comment>
<organism>
    <name type="scientific">Streptococcus gordonii (strain Challis / ATCC 35105 / BCRC 15272 / CH1 / DL1 / V288)</name>
    <dbReference type="NCBI Taxonomy" id="467705"/>
    <lineage>
        <taxon>Bacteria</taxon>
        <taxon>Bacillati</taxon>
        <taxon>Bacillota</taxon>
        <taxon>Bacilli</taxon>
        <taxon>Lactobacillales</taxon>
        <taxon>Streptococcaceae</taxon>
        <taxon>Streptococcus</taxon>
    </lineage>
</organism>
<name>TRHO_STRGC</name>
<protein>
    <recommendedName>
        <fullName evidence="1">tRNA uridine(34) hydroxylase</fullName>
        <ecNumber evidence="1">1.14.-.-</ecNumber>
    </recommendedName>
    <alternativeName>
        <fullName evidence="1">tRNA hydroxylation protein O</fullName>
    </alternativeName>
</protein>
<keyword id="KW-0560">Oxidoreductase</keyword>
<keyword id="KW-1185">Reference proteome</keyword>
<keyword id="KW-0819">tRNA processing</keyword>
<sequence length="328" mass="37886">MAKDIRVLLYYKYVPIENAEKFAADHLAFCKSIGLKGRILVADEGINGTVSGDYETTQKYMDYVHSLPGMEDLWFKIDEENEQAFKKMFVRYKKEIVHLGLEDNDFDNDINPLETTGAYLSPKEFKEALLDEDTVVLDTRNDYEYDLGHFRGAIRPDIRNFRELPQWVRDNKEKFMDKRVVVYCTGGVRCEKFSGWMVREGYKDVGQLHGGIATYGKDPEVQGELWDGKMYVFDERISVDINHVDPVVIGKDWFDGTPCERYVNCGNPECNRRILTSEENEDKYLRGCSHECRVHPRNRYVAENGLSQAEVVERLAVIGESLETLVAQ</sequence>
<proteinExistence type="inferred from homology"/>